<accession>A1JTV9</accession>
<organism>
    <name type="scientific">Yersinia enterocolitica serotype O:8 / biotype 1B (strain NCTC 13174 / 8081)</name>
    <dbReference type="NCBI Taxonomy" id="393305"/>
    <lineage>
        <taxon>Bacteria</taxon>
        <taxon>Pseudomonadati</taxon>
        <taxon>Pseudomonadota</taxon>
        <taxon>Gammaproteobacteria</taxon>
        <taxon>Enterobacterales</taxon>
        <taxon>Yersiniaceae</taxon>
        <taxon>Yersinia</taxon>
    </lineage>
</organism>
<protein>
    <recommendedName>
        <fullName evidence="1">Histidinol-phosphate aminotransferase</fullName>
        <ecNumber evidence="1">2.6.1.9</ecNumber>
    </recommendedName>
    <alternativeName>
        <fullName evidence="1">Imidazole acetol-phosphate transaminase</fullName>
    </alternativeName>
</protein>
<evidence type="ECO:0000255" key="1">
    <source>
        <dbReference type="HAMAP-Rule" id="MF_01023"/>
    </source>
</evidence>
<proteinExistence type="inferred from homology"/>
<name>HIS8_YERE8</name>
<dbReference type="EC" id="2.6.1.9" evidence="1"/>
<dbReference type="EMBL" id="AM286415">
    <property type="protein sequence ID" value="CAL12801.1"/>
    <property type="molecule type" value="Genomic_DNA"/>
</dbReference>
<dbReference type="RefSeq" id="WP_005168372.1">
    <property type="nucleotide sequence ID" value="NC_008800.1"/>
</dbReference>
<dbReference type="RefSeq" id="YP_001006958.1">
    <property type="nucleotide sequence ID" value="NC_008800.1"/>
</dbReference>
<dbReference type="SMR" id="A1JTV9"/>
<dbReference type="KEGG" id="yen:YE2767"/>
<dbReference type="PATRIC" id="fig|393305.7.peg.2940"/>
<dbReference type="eggNOG" id="COG0079">
    <property type="taxonomic scope" value="Bacteria"/>
</dbReference>
<dbReference type="HOGENOM" id="CLU_017584_3_1_6"/>
<dbReference type="OrthoDB" id="9813612at2"/>
<dbReference type="UniPathway" id="UPA00031">
    <property type="reaction ID" value="UER00012"/>
</dbReference>
<dbReference type="Proteomes" id="UP000000642">
    <property type="component" value="Chromosome"/>
</dbReference>
<dbReference type="GO" id="GO:0004400">
    <property type="term" value="F:histidinol-phosphate transaminase activity"/>
    <property type="evidence" value="ECO:0007669"/>
    <property type="project" value="UniProtKB-UniRule"/>
</dbReference>
<dbReference type="GO" id="GO:0030170">
    <property type="term" value="F:pyridoxal phosphate binding"/>
    <property type="evidence" value="ECO:0007669"/>
    <property type="project" value="InterPro"/>
</dbReference>
<dbReference type="GO" id="GO:0000105">
    <property type="term" value="P:L-histidine biosynthetic process"/>
    <property type="evidence" value="ECO:0007669"/>
    <property type="project" value="UniProtKB-UniRule"/>
</dbReference>
<dbReference type="CDD" id="cd00609">
    <property type="entry name" value="AAT_like"/>
    <property type="match status" value="1"/>
</dbReference>
<dbReference type="Gene3D" id="3.90.1150.10">
    <property type="entry name" value="Aspartate Aminotransferase, domain 1"/>
    <property type="match status" value="1"/>
</dbReference>
<dbReference type="Gene3D" id="3.40.640.10">
    <property type="entry name" value="Type I PLP-dependent aspartate aminotransferase-like (Major domain)"/>
    <property type="match status" value="1"/>
</dbReference>
<dbReference type="HAMAP" id="MF_01023">
    <property type="entry name" value="HisC_aminotrans_2"/>
    <property type="match status" value="1"/>
</dbReference>
<dbReference type="InterPro" id="IPR001917">
    <property type="entry name" value="Aminotrans_II_pyridoxalP_BS"/>
</dbReference>
<dbReference type="InterPro" id="IPR004839">
    <property type="entry name" value="Aminotransferase_I/II_large"/>
</dbReference>
<dbReference type="InterPro" id="IPR005861">
    <property type="entry name" value="HisP_aminotrans"/>
</dbReference>
<dbReference type="InterPro" id="IPR015424">
    <property type="entry name" value="PyrdxlP-dep_Trfase"/>
</dbReference>
<dbReference type="InterPro" id="IPR015421">
    <property type="entry name" value="PyrdxlP-dep_Trfase_major"/>
</dbReference>
<dbReference type="InterPro" id="IPR015422">
    <property type="entry name" value="PyrdxlP-dep_Trfase_small"/>
</dbReference>
<dbReference type="NCBIfam" id="TIGR01141">
    <property type="entry name" value="hisC"/>
    <property type="match status" value="1"/>
</dbReference>
<dbReference type="PANTHER" id="PTHR42885:SF2">
    <property type="entry name" value="HISTIDINOL-PHOSPHATE AMINOTRANSFERASE"/>
    <property type="match status" value="1"/>
</dbReference>
<dbReference type="PANTHER" id="PTHR42885">
    <property type="entry name" value="HISTIDINOL-PHOSPHATE AMINOTRANSFERASE-RELATED"/>
    <property type="match status" value="1"/>
</dbReference>
<dbReference type="Pfam" id="PF00155">
    <property type="entry name" value="Aminotran_1_2"/>
    <property type="match status" value="1"/>
</dbReference>
<dbReference type="SUPFAM" id="SSF53383">
    <property type="entry name" value="PLP-dependent transferases"/>
    <property type="match status" value="1"/>
</dbReference>
<dbReference type="PROSITE" id="PS00599">
    <property type="entry name" value="AA_TRANSFER_CLASS_2"/>
    <property type="match status" value="1"/>
</dbReference>
<keyword id="KW-0028">Amino-acid biosynthesis</keyword>
<keyword id="KW-0032">Aminotransferase</keyword>
<keyword id="KW-0368">Histidine biosynthesis</keyword>
<keyword id="KW-0663">Pyridoxal phosphate</keyword>
<keyword id="KW-0808">Transferase</keyword>
<gene>
    <name evidence="1" type="primary">hisC</name>
    <name type="ordered locus">YE2767</name>
</gene>
<sequence length="374" mass="41038">MSQSTNVTELARANVRALTPYMSARRLGGNGDVWLNANEYPLATEYQLTAQTFNRYPECQPKLVIERYAAYAGLATDQVLVSRGADEGIELLIRAFCEPAQDAILFCPPTYGMYAVSAETFGVELRTVPTKADWQLDLPAIKASLDRVKLIYICSPNNPTGNLINPADLRAVLELAQGRAIVAIDEAYIEFCPQASVSSWLKDYPNLVILRTLSKAFALAGLRCGFTLANSDIIQLLLKVIAPYPLSTPVADIAAQALSPLGLEQMRQRVSEVTANRAWLQNALQECACVEQVFTSESNYLLARFTASSSVFKTLWDQGIILRDQNKQPSLSNCLRITIGTRQECERVIAALAPLPGVDSPNSTNTASLRKETI</sequence>
<comment type="catalytic activity">
    <reaction evidence="1">
        <text>L-histidinol phosphate + 2-oxoglutarate = 3-(imidazol-4-yl)-2-oxopropyl phosphate + L-glutamate</text>
        <dbReference type="Rhea" id="RHEA:23744"/>
        <dbReference type="ChEBI" id="CHEBI:16810"/>
        <dbReference type="ChEBI" id="CHEBI:29985"/>
        <dbReference type="ChEBI" id="CHEBI:57766"/>
        <dbReference type="ChEBI" id="CHEBI:57980"/>
        <dbReference type="EC" id="2.6.1.9"/>
    </reaction>
</comment>
<comment type="cofactor">
    <cofactor evidence="1">
        <name>pyridoxal 5'-phosphate</name>
        <dbReference type="ChEBI" id="CHEBI:597326"/>
    </cofactor>
</comment>
<comment type="pathway">
    <text evidence="1">Amino-acid biosynthesis; L-histidine biosynthesis; L-histidine from 5-phospho-alpha-D-ribose 1-diphosphate: step 7/9.</text>
</comment>
<comment type="subunit">
    <text evidence="1">Homodimer.</text>
</comment>
<comment type="similarity">
    <text evidence="1">Belongs to the class-II pyridoxal-phosphate-dependent aminotransferase family. Histidinol-phosphate aminotransferase subfamily.</text>
</comment>
<feature type="chain" id="PRO_1000063511" description="Histidinol-phosphate aminotransferase">
    <location>
        <begin position="1"/>
        <end position="374"/>
    </location>
</feature>
<feature type="modified residue" description="N6-(pyridoxal phosphate)lysine" evidence="1">
    <location>
        <position position="215"/>
    </location>
</feature>
<reference key="1">
    <citation type="journal article" date="2006" name="PLoS Genet.">
        <title>The complete genome sequence and comparative genome analysis of the high pathogenicity Yersinia enterocolitica strain 8081.</title>
        <authorList>
            <person name="Thomson N.R."/>
            <person name="Howard S."/>
            <person name="Wren B.W."/>
            <person name="Holden M.T.G."/>
            <person name="Crossman L."/>
            <person name="Challis G.L."/>
            <person name="Churcher C."/>
            <person name="Mungall K."/>
            <person name="Brooks K."/>
            <person name="Chillingworth T."/>
            <person name="Feltwell T."/>
            <person name="Abdellah Z."/>
            <person name="Hauser H."/>
            <person name="Jagels K."/>
            <person name="Maddison M."/>
            <person name="Moule S."/>
            <person name="Sanders M."/>
            <person name="Whitehead S."/>
            <person name="Quail M.A."/>
            <person name="Dougan G."/>
            <person name="Parkhill J."/>
            <person name="Prentice M.B."/>
        </authorList>
    </citation>
    <scope>NUCLEOTIDE SEQUENCE [LARGE SCALE GENOMIC DNA]</scope>
    <source>
        <strain>NCTC 13174 / 8081</strain>
    </source>
</reference>